<gene>
    <name type="primary">Poxn</name>
    <name type="synonym">pox-n</name>
    <name type="ORF">CG8246</name>
</gene>
<proteinExistence type="evidence at protein level"/>
<reference key="1">
    <citation type="journal article" date="1992" name="Cell">
        <title>The paired box gene pox neuro: a determinant of poly-innervated sense organs in Drosophila.</title>
        <authorList>
            <person name="Dambly-Chaudiere C."/>
            <person name="Jamet E."/>
            <person name="Burri M."/>
            <person name="Bopp D."/>
            <person name="Basler K."/>
            <person name="Hafen E."/>
            <person name="Dumont N."/>
            <person name="Spielmann P."/>
            <person name="Ghysen A."/>
            <person name="Noll M."/>
        </authorList>
    </citation>
    <scope>NUCLEOTIDE SEQUENCE [MRNA]</scope>
</reference>
<reference key="2">
    <citation type="journal article" date="2000" name="Science">
        <title>The genome sequence of Drosophila melanogaster.</title>
        <authorList>
            <person name="Adams M.D."/>
            <person name="Celniker S.E."/>
            <person name="Holt R.A."/>
            <person name="Evans C.A."/>
            <person name="Gocayne J.D."/>
            <person name="Amanatides P.G."/>
            <person name="Scherer S.E."/>
            <person name="Li P.W."/>
            <person name="Hoskins R.A."/>
            <person name="Galle R.F."/>
            <person name="George R.A."/>
            <person name="Lewis S.E."/>
            <person name="Richards S."/>
            <person name="Ashburner M."/>
            <person name="Henderson S.N."/>
            <person name="Sutton G.G."/>
            <person name="Wortman J.R."/>
            <person name="Yandell M.D."/>
            <person name="Zhang Q."/>
            <person name="Chen L.X."/>
            <person name="Brandon R.C."/>
            <person name="Rogers Y.-H.C."/>
            <person name="Blazej R.G."/>
            <person name="Champe M."/>
            <person name="Pfeiffer B.D."/>
            <person name="Wan K.H."/>
            <person name="Doyle C."/>
            <person name="Baxter E.G."/>
            <person name="Helt G."/>
            <person name="Nelson C.R."/>
            <person name="Miklos G.L.G."/>
            <person name="Abril J.F."/>
            <person name="Agbayani A."/>
            <person name="An H.-J."/>
            <person name="Andrews-Pfannkoch C."/>
            <person name="Baldwin D."/>
            <person name="Ballew R.M."/>
            <person name="Basu A."/>
            <person name="Baxendale J."/>
            <person name="Bayraktaroglu L."/>
            <person name="Beasley E.M."/>
            <person name="Beeson K.Y."/>
            <person name="Benos P.V."/>
            <person name="Berman B.P."/>
            <person name="Bhandari D."/>
            <person name="Bolshakov S."/>
            <person name="Borkova D."/>
            <person name="Botchan M.R."/>
            <person name="Bouck J."/>
            <person name="Brokstein P."/>
            <person name="Brottier P."/>
            <person name="Burtis K.C."/>
            <person name="Busam D.A."/>
            <person name="Butler H."/>
            <person name="Cadieu E."/>
            <person name="Center A."/>
            <person name="Chandra I."/>
            <person name="Cherry J.M."/>
            <person name="Cawley S."/>
            <person name="Dahlke C."/>
            <person name="Davenport L.B."/>
            <person name="Davies P."/>
            <person name="de Pablos B."/>
            <person name="Delcher A."/>
            <person name="Deng Z."/>
            <person name="Mays A.D."/>
            <person name="Dew I."/>
            <person name="Dietz S.M."/>
            <person name="Dodson K."/>
            <person name="Doup L.E."/>
            <person name="Downes M."/>
            <person name="Dugan-Rocha S."/>
            <person name="Dunkov B.C."/>
            <person name="Dunn P."/>
            <person name="Durbin K.J."/>
            <person name="Evangelista C.C."/>
            <person name="Ferraz C."/>
            <person name="Ferriera S."/>
            <person name="Fleischmann W."/>
            <person name="Fosler C."/>
            <person name="Gabrielian A.E."/>
            <person name="Garg N.S."/>
            <person name="Gelbart W.M."/>
            <person name="Glasser K."/>
            <person name="Glodek A."/>
            <person name="Gong F."/>
            <person name="Gorrell J.H."/>
            <person name="Gu Z."/>
            <person name="Guan P."/>
            <person name="Harris M."/>
            <person name="Harris N.L."/>
            <person name="Harvey D.A."/>
            <person name="Heiman T.J."/>
            <person name="Hernandez J.R."/>
            <person name="Houck J."/>
            <person name="Hostin D."/>
            <person name="Houston K.A."/>
            <person name="Howland T.J."/>
            <person name="Wei M.-H."/>
            <person name="Ibegwam C."/>
            <person name="Jalali M."/>
            <person name="Kalush F."/>
            <person name="Karpen G.H."/>
            <person name="Ke Z."/>
            <person name="Kennison J.A."/>
            <person name="Ketchum K.A."/>
            <person name="Kimmel B.E."/>
            <person name="Kodira C.D."/>
            <person name="Kraft C.L."/>
            <person name="Kravitz S."/>
            <person name="Kulp D."/>
            <person name="Lai Z."/>
            <person name="Lasko P."/>
            <person name="Lei Y."/>
            <person name="Levitsky A.A."/>
            <person name="Li J.H."/>
            <person name="Li Z."/>
            <person name="Liang Y."/>
            <person name="Lin X."/>
            <person name="Liu X."/>
            <person name="Mattei B."/>
            <person name="McIntosh T.C."/>
            <person name="McLeod M.P."/>
            <person name="McPherson D."/>
            <person name="Merkulov G."/>
            <person name="Milshina N.V."/>
            <person name="Mobarry C."/>
            <person name="Morris J."/>
            <person name="Moshrefi A."/>
            <person name="Mount S.M."/>
            <person name="Moy M."/>
            <person name="Murphy B."/>
            <person name="Murphy L."/>
            <person name="Muzny D.M."/>
            <person name="Nelson D.L."/>
            <person name="Nelson D.R."/>
            <person name="Nelson K.A."/>
            <person name="Nixon K."/>
            <person name="Nusskern D.R."/>
            <person name="Pacleb J.M."/>
            <person name="Palazzolo M."/>
            <person name="Pittman G.S."/>
            <person name="Pan S."/>
            <person name="Pollard J."/>
            <person name="Puri V."/>
            <person name="Reese M.G."/>
            <person name="Reinert K."/>
            <person name="Remington K."/>
            <person name="Saunders R.D.C."/>
            <person name="Scheeler F."/>
            <person name="Shen H."/>
            <person name="Shue B.C."/>
            <person name="Siden-Kiamos I."/>
            <person name="Simpson M."/>
            <person name="Skupski M.P."/>
            <person name="Smith T.J."/>
            <person name="Spier E."/>
            <person name="Spradling A.C."/>
            <person name="Stapleton M."/>
            <person name="Strong R."/>
            <person name="Sun E."/>
            <person name="Svirskas R."/>
            <person name="Tector C."/>
            <person name="Turner R."/>
            <person name="Venter E."/>
            <person name="Wang A.H."/>
            <person name="Wang X."/>
            <person name="Wang Z.-Y."/>
            <person name="Wassarman D.A."/>
            <person name="Weinstock G.M."/>
            <person name="Weissenbach J."/>
            <person name="Williams S.M."/>
            <person name="Woodage T."/>
            <person name="Worley K.C."/>
            <person name="Wu D."/>
            <person name="Yang S."/>
            <person name="Yao Q.A."/>
            <person name="Ye J."/>
            <person name="Yeh R.-F."/>
            <person name="Zaveri J.S."/>
            <person name="Zhan M."/>
            <person name="Zhang G."/>
            <person name="Zhao Q."/>
            <person name="Zheng L."/>
            <person name="Zheng X.H."/>
            <person name="Zhong F.N."/>
            <person name="Zhong W."/>
            <person name="Zhou X."/>
            <person name="Zhu S.C."/>
            <person name="Zhu X."/>
            <person name="Smith H.O."/>
            <person name="Gibbs R.A."/>
            <person name="Myers E.W."/>
            <person name="Rubin G.M."/>
            <person name="Venter J.C."/>
        </authorList>
    </citation>
    <scope>NUCLEOTIDE SEQUENCE [LARGE SCALE GENOMIC DNA]</scope>
    <source>
        <strain>Berkeley</strain>
    </source>
</reference>
<reference key="3">
    <citation type="journal article" date="2002" name="Genome Biol.">
        <title>Annotation of the Drosophila melanogaster euchromatic genome: a systematic review.</title>
        <authorList>
            <person name="Misra S."/>
            <person name="Crosby M.A."/>
            <person name="Mungall C.J."/>
            <person name="Matthews B.B."/>
            <person name="Campbell K.S."/>
            <person name="Hradecky P."/>
            <person name="Huang Y."/>
            <person name="Kaminker J.S."/>
            <person name="Millburn G.H."/>
            <person name="Prochnik S.E."/>
            <person name="Smith C.D."/>
            <person name="Tupy J.L."/>
            <person name="Whitfield E.J."/>
            <person name="Bayraktaroglu L."/>
            <person name="Berman B.P."/>
            <person name="Bettencourt B.R."/>
            <person name="Celniker S.E."/>
            <person name="de Grey A.D.N.J."/>
            <person name="Drysdale R.A."/>
            <person name="Harris N.L."/>
            <person name="Richter J."/>
            <person name="Russo S."/>
            <person name="Schroeder A.J."/>
            <person name="Shu S.Q."/>
            <person name="Stapleton M."/>
            <person name="Yamada C."/>
            <person name="Ashburner M."/>
            <person name="Gelbart W.M."/>
            <person name="Rubin G.M."/>
            <person name="Lewis S.E."/>
        </authorList>
    </citation>
    <scope>GENOME REANNOTATION</scope>
    <source>
        <strain>Berkeley</strain>
    </source>
</reference>
<reference key="4">
    <citation type="journal article" date="1989" name="EMBO J.">
        <title>Isolation of two tissue-specific Drosophila paired box genes, Pox meso and Pox neuro.</title>
        <authorList>
            <person name="Bopp D."/>
            <person name="Jamet E."/>
            <person name="Baumgartner S."/>
            <person name="Burri M."/>
            <person name="Noll M."/>
        </authorList>
    </citation>
    <scope>NUCLEOTIDE SEQUENCE OF 1-35</scope>
</reference>
<reference key="5">
    <citation type="journal article" date="1994" name="Neuron">
        <title>The gene poxn controls different steps of the formation of chemosensory organs in Drosophila.</title>
        <authorList>
            <person name="Nottebohm E."/>
            <person name="Usui A."/>
            <person name="Therianos S."/>
            <person name="Kimura K."/>
            <person name="Dambly-Chaudiere C."/>
            <person name="Ghysen A."/>
        </authorList>
    </citation>
    <scope>FUNCTION</scope>
</reference>
<reference key="6">
    <citation type="journal article" date="1997" name="J. Neurobiol.">
        <title>pox-neuro is required for development of chemosensory bristles in Drosophila.</title>
        <authorList>
            <person name="Awasaki T."/>
            <person name="Kimura K."/>
        </authorList>
    </citation>
    <scope>FUNCTION</scope>
</reference>
<dbReference type="EMBL" id="M86927">
    <property type="protein sequence ID" value="AAA28832.1"/>
    <property type="molecule type" value="mRNA"/>
</dbReference>
<dbReference type="EMBL" id="AE013599">
    <property type="protein sequence ID" value="AAF58104.1"/>
    <property type="molecule type" value="Genomic_DNA"/>
</dbReference>
<dbReference type="EMBL" id="X58917">
    <property type="protein sequence ID" value="CAA41721.1"/>
    <property type="molecule type" value="Genomic_DNA"/>
</dbReference>
<dbReference type="PIR" id="A38153">
    <property type="entry name" value="A38153"/>
</dbReference>
<dbReference type="RefSeq" id="NP_001261016.1">
    <property type="nucleotide sequence ID" value="NM_001274087.1"/>
</dbReference>
<dbReference type="RefSeq" id="NP_476686.1">
    <property type="nucleotide sequence ID" value="NM_057338.3"/>
</dbReference>
<dbReference type="SMR" id="P23758"/>
<dbReference type="BioGRID" id="62469">
    <property type="interactions" value="37"/>
</dbReference>
<dbReference type="DIP" id="DIP-23815N"/>
<dbReference type="FunCoup" id="P23758">
    <property type="interactions" value="36"/>
</dbReference>
<dbReference type="IntAct" id="P23758">
    <property type="interactions" value="31"/>
</dbReference>
<dbReference type="STRING" id="7227.FBpp0302942"/>
<dbReference type="GlyGen" id="P23758">
    <property type="glycosylation" value="2 sites"/>
</dbReference>
<dbReference type="PaxDb" id="7227-FBpp0302942"/>
<dbReference type="ABCD" id="P23758">
    <property type="antibodies" value="3 sequenced antibodies"/>
</dbReference>
<dbReference type="DNASU" id="36741"/>
<dbReference type="EnsemblMetazoa" id="FBtr0087311">
    <property type="protein sequence ID" value="FBpp0086446"/>
    <property type="gene ID" value="FBgn0003130"/>
</dbReference>
<dbReference type="EnsemblMetazoa" id="FBtr0329908">
    <property type="protein sequence ID" value="FBpp0302942"/>
    <property type="gene ID" value="FBgn0003130"/>
</dbReference>
<dbReference type="GeneID" id="36741"/>
<dbReference type="KEGG" id="dme:Dmel_CG8246"/>
<dbReference type="AGR" id="FB:FBgn0003130"/>
<dbReference type="CTD" id="36741"/>
<dbReference type="FlyBase" id="FBgn0003130">
    <property type="gene designation" value="Poxn"/>
</dbReference>
<dbReference type="VEuPathDB" id="VectorBase:FBgn0003130"/>
<dbReference type="eggNOG" id="KOG3862">
    <property type="taxonomic scope" value="Eukaryota"/>
</dbReference>
<dbReference type="HOGENOM" id="CLU_019664_0_0_1"/>
<dbReference type="InParanoid" id="P23758"/>
<dbReference type="OMA" id="YTQAHMQ"/>
<dbReference type="OrthoDB" id="3225452at2759"/>
<dbReference type="PhylomeDB" id="P23758"/>
<dbReference type="Reactome" id="R-DME-8939245">
    <property type="pathway name" value="RUNX1 regulates transcription of genes involved in BCR signaling"/>
</dbReference>
<dbReference type="SignaLink" id="P23758"/>
<dbReference type="BioGRID-ORCS" id="36741">
    <property type="hits" value="0 hits in 3 CRISPR screens"/>
</dbReference>
<dbReference type="GenomeRNAi" id="36741"/>
<dbReference type="PRO" id="PR:P23758"/>
<dbReference type="Proteomes" id="UP000000803">
    <property type="component" value="Chromosome 2R"/>
</dbReference>
<dbReference type="Bgee" id="FBgn0003130">
    <property type="expression patterns" value="Expressed in adult class III enteroendocrine cell in adult midgut (Drosophila) and 27 other cell types or tissues"/>
</dbReference>
<dbReference type="ExpressionAtlas" id="P23758">
    <property type="expression patterns" value="baseline and differential"/>
</dbReference>
<dbReference type="GO" id="GO:0005634">
    <property type="term" value="C:nucleus"/>
    <property type="evidence" value="ECO:0000314"/>
    <property type="project" value="FlyBase"/>
</dbReference>
<dbReference type="GO" id="GO:0000981">
    <property type="term" value="F:DNA-binding transcription factor activity, RNA polymerase II-specific"/>
    <property type="evidence" value="ECO:0000318"/>
    <property type="project" value="GO_Central"/>
</dbReference>
<dbReference type="GO" id="GO:0000978">
    <property type="term" value="F:RNA polymerase II cis-regulatory region sequence-specific DNA binding"/>
    <property type="evidence" value="ECO:0000318"/>
    <property type="project" value="GO_Central"/>
</dbReference>
<dbReference type="GO" id="GO:0008343">
    <property type="term" value="P:adult feeding behavior"/>
    <property type="evidence" value="ECO:0000315"/>
    <property type="project" value="FlyBase"/>
</dbReference>
<dbReference type="GO" id="GO:0048800">
    <property type="term" value="P:antennal morphogenesis"/>
    <property type="evidence" value="ECO:0000315"/>
    <property type="project" value="FlyBase"/>
</dbReference>
<dbReference type="GO" id="GO:0030154">
    <property type="term" value="P:cell differentiation"/>
    <property type="evidence" value="ECO:0007669"/>
    <property type="project" value="UniProtKB-KW"/>
</dbReference>
<dbReference type="GO" id="GO:0007480">
    <property type="term" value="P:imaginal disc-derived leg morphogenesis"/>
    <property type="evidence" value="ECO:0000315"/>
    <property type="project" value="FlyBase"/>
</dbReference>
<dbReference type="GO" id="GO:0007476">
    <property type="term" value="P:imaginal disc-derived wing morphogenesis"/>
    <property type="evidence" value="ECO:0000315"/>
    <property type="project" value="FlyBase"/>
</dbReference>
<dbReference type="GO" id="GO:0008049">
    <property type="term" value="P:male courtship behavior"/>
    <property type="evidence" value="ECO:0000315"/>
    <property type="project" value="FlyBase"/>
</dbReference>
<dbReference type="GO" id="GO:0007399">
    <property type="term" value="P:nervous system development"/>
    <property type="evidence" value="ECO:0000318"/>
    <property type="project" value="GO_Central"/>
</dbReference>
<dbReference type="GO" id="GO:0006357">
    <property type="term" value="P:regulation of transcription by RNA polymerase II"/>
    <property type="evidence" value="ECO:0000318"/>
    <property type="project" value="GO_Central"/>
</dbReference>
<dbReference type="GO" id="GO:0009415">
    <property type="term" value="P:response to water"/>
    <property type="evidence" value="ECO:0000314"/>
    <property type="project" value="FlyBase"/>
</dbReference>
<dbReference type="GO" id="GO:0007423">
    <property type="term" value="P:sensory organ development"/>
    <property type="evidence" value="ECO:0000315"/>
    <property type="project" value="FlyBase"/>
</dbReference>
<dbReference type="FunFam" id="1.10.10.10:FF:000013">
    <property type="entry name" value="Paired box 8 isoform 1"/>
    <property type="match status" value="1"/>
</dbReference>
<dbReference type="FunFam" id="1.10.10.10:FF:000003">
    <property type="entry name" value="Paired box protein Pax-6"/>
    <property type="match status" value="1"/>
</dbReference>
<dbReference type="Gene3D" id="1.10.10.10">
    <property type="entry name" value="Winged helix-like DNA-binding domain superfamily/Winged helix DNA-binding domain"/>
    <property type="match status" value="2"/>
</dbReference>
<dbReference type="InterPro" id="IPR009057">
    <property type="entry name" value="Homeodomain-like_sf"/>
</dbReference>
<dbReference type="InterPro" id="IPR043182">
    <property type="entry name" value="PAIRED_DNA-bd_dom"/>
</dbReference>
<dbReference type="InterPro" id="IPR001523">
    <property type="entry name" value="Paired_dom"/>
</dbReference>
<dbReference type="InterPro" id="IPR043565">
    <property type="entry name" value="PAX_fam"/>
</dbReference>
<dbReference type="InterPro" id="IPR036388">
    <property type="entry name" value="WH-like_DNA-bd_sf"/>
</dbReference>
<dbReference type="PANTHER" id="PTHR45636:SF43">
    <property type="entry name" value="PAIRED BOX POX-NEURO PROTEIN"/>
    <property type="match status" value="1"/>
</dbReference>
<dbReference type="PANTHER" id="PTHR45636">
    <property type="entry name" value="PAIRED BOX PROTEIN PAX-6-RELATED-RELATED"/>
    <property type="match status" value="1"/>
</dbReference>
<dbReference type="Pfam" id="PF00292">
    <property type="entry name" value="PAX"/>
    <property type="match status" value="1"/>
</dbReference>
<dbReference type="PRINTS" id="PR00027">
    <property type="entry name" value="PAIREDBOX"/>
</dbReference>
<dbReference type="SMART" id="SM00351">
    <property type="entry name" value="PAX"/>
    <property type="match status" value="1"/>
</dbReference>
<dbReference type="SUPFAM" id="SSF46689">
    <property type="entry name" value="Homeodomain-like"/>
    <property type="match status" value="1"/>
</dbReference>
<dbReference type="PROSITE" id="PS00034">
    <property type="entry name" value="PAIRED_1"/>
    <property type="match status" value="1"/>
</dbReference>
<dbReference type="PROSITE" id="PS51057">
    <property type="entry name" value="PAIRED_2"/>
    <property type="match status" value="1"/>
</dbReference>
<name>POXN_DROME</name>
<feature type="chain" id="PRO_0000050171" description="Paired box pox-neuro protein">
    <location>
        <begin position="1"/>
        <end position="425"/>
    </location>
</feature>
<feature type="DNA-binding region" description="Paired" evidence="1">
    <location>
        <begin position="5"/>
        <end position="132"/>
    </location>
</feature>
<feature type="region of interest" description="PAI subdomain" evidence="1">
    <location>
        <begin position="8"/>
        <end position="64"/>
    </location>
</feature>
<feature type="region of interest" description="RED subdomain" evidence="1">
    <location>
        <begin position="84"/>
        <end position="132"/>
    </location>
</feature>
<feature type="region of interest" description="Disordered" evidence="2">
    <location>
        <begin position="159"/>
        <end position="188"/>
    </location>
</feature>
<feature type="region of interest" description="Disordered" evidence="2">
    <location>
        <begin position="297"/>
        <end position="358"/>
    </location>
</feature>
<feature type="region of interest" description="Disordered" evidence="2">
    <location>
        <begin position="383"/>
        <end position="425"/>
    </location>
</feature>
<feature type="compositionally biased region" description="Pro residues" evidence="2">
    <location>
        <begin position="172"/>
        <end position="185"/>
    </location>
</feature>
<feature type="compositionally biased region" description="Low complexity" evidence="2">
    <location>
        <begin position="323"/>
        <end position="332"/>
    </location>
</feature>
<feature type="compositionally biased region" description="Low complexity" evidence="2">
    <location>
        <begin position="340"/>
        <end position="349"/>
    </location>
</feature>
<feature type="compositionally biased region" description="Acidic residues" evidence="2">
    <location>
        <begin position="402"/>
        <end position="425"/>
    </location>
</feature>
<feature type="sequence conflict" description="In Ref. 1; AAA28832." evidence="5" ref="1">
    <original>P</original>
    <variation>T</variation>
    <location>
        <position position="343"/>
    </location>
</feature>
<feature type="sequence conflict" description="In Ref. 1; AAA28832." evidence="5" ref="1">
    <original>S</original>
    <variation>R</variation>
    <location>
        <position position="377"/>
    </location>
</feature>
<feature type="sequence conflict" description="In Ref. 1; AAA28832." evidence="5" ref="1">
    <original>A</original>
    <variation>G</variation>
    <location>
        <position position="411"/>
    </location>
</feature>
<keyword id="KW-0217">Developmental protein</keyword>
<keyword id="KW-0221">Differentiation</keyword>
<keyword id="KW-0238">DNA-binding</keyword>
<keyword id="KW-0524">Neurogenesis</keyword>
<keyword id="KW-0539">Nucleus</keyword>
<keyword id="KW-0563">Paired box</keyword>
<keyword id="KW-1185">Reference proteome</keyword>
<keyword id="KW-0804">Transcription</keyword>
<keyword id="KW-0805">Transcription regulation</keyword>
<protein>
    <recommendedName>
        <fullName>Paired box pox-neuro protein</fullName>
    </recommendedName>
    <alternativeName>
        <fullName>Paired box neuronal protein</fullName>
    </alternativeName>
</protein>
<accession>P23758</accession>
<accession>Q9V7F3</accession>
<evidence type="ECO:0000255" key="1">
    <source>
        <dbReference type="PROSITE-ProRule" id="PRU00381"/>
    </source>
</evidence>
<evidence type="ECO:0000256" key="2">
    <source>
        <dbReference type="SAM" id="MobiDB-lite"/>
    </source>
</evidence>
<evidence type="ECO:0000269" key="3">
    <source>
    </source>
</evidence>
<evidence type="ECO:0000269" key="4">
    <source>
    </source>
</evidence>
<evidence type="ECO:0000305" key="5"/>
<sequence>MPHTGQAGVNQLGGVFVNGRPLPDCVRRRIVDLALCGVRPCDISRQLLVSHGCVSKILTRFYETGSIRPGSIGGSKTKQVATPTVVKKIIRLKEENSGMFAWEIREQLQQQRVCDPSSVPSISSINRILRNSGLWTDEMTSSQQNAAAAAAAAAAAAHQAGSGPSNGYGGQAPPPPVTVAPPTPAATPSIARYAKPPALMMNSAGEMPIKPAPKMPPSMGHGHSHGLNPNVSGLDLSYSALHKHWLWNPSLLYYTQAHIQAQAAASGGQFLPYAGGYLPHAMAAAAASSTSALGGFTKSESSIDLSTPGAAGDALSDCDSGKSSPAALSLTASGGGNGAGSAPEASPGSTLSHSRKRNPYSIEELLKKPEKRLRLDSNRLECLESSSCESSQDSPVAPPLETPEDEDPAEAEEEQEEEDSVEVVN</sequence>
<organism>
    <name type="scientific">Drosophila melanogaster</name>
    <name type="common">Fruit fly</name>
    <dbReference type="NCBI Taxonomy" id="7227"/>
    <lineage>
        <taxon>Eukaryota</taxon>
        <taxon>Metazoa</taxon>
        <taxon>Ecdysozoa</taxon>
        <taxon>Arthropoda</taxon>
        <taxon>Hexapoda</taxon>
        <taxon>Insecta</taxon>
        <taxon>Pterygota</taxon>
        <taxon>Neoptera</taxon>
        <taxon>Endopterygota</taxon>
        <taxon>Diptera</taxon>
        <taxon>Brachycera</taxon>
        <taxon>Muscomorpha</taxon>
        <taxon>Ephydroidea</taxon>
        <taxon>Drosophilidae</taxon>
        <taxon>Drosophila</taxon>
        <taxon>Sophophora</taxon>
    </lineage>
</organism>
<comment type="function">
    <text evidence="3 4">Transcriptional regulator that specifies poly-innervated organs (chemosensory bristle). Also controls the number of neurons.</text>
</comment>
<comment type="interaction">
    <interactant intactId="EBI-105329">
        <id>P23758</id>
    </interactant>
    <interactant intactId="EBI-15107367">
        <id>A0A0B4KEQ7</id>
        <label>Dmel\CG10209</label>
    </interactant>
    <organismsDiffer>false</organismsDiffer>
    <experiments>3</experiments>
</comment>
<comment type="interaction">
    <interactant intactId="EBI-105329">
        <id>P23758</id>
    </interactant>
    <interactant intactId="EBI-125786">
        <id>P02835</id>
        <label>ftz</label>
    </interactant>
    <organismsDiffer>false</organismsDiffer>
    <experiments>3</experiments>
</comment>
<comment type="subcellular location">
    <subcellularLocation>
        <location>Nucleus</location>
    </subcellularLocation>
</comment>
<comment type="tissue specificity">
    <text>Central and peripheral nervous systems.</text>
</comment>